<feature type="chain" id="PRO_1000054397" description="Type III pantothenate kinase">
    <location>
        <begin position="1"/>
        <end position="257"/>
    </location>
</feature>
<feature type="active site" description="Proton acceptor" evidence="1">
    <location>
        <position position="105"/>
    </location>
</feature>
<feature type="binding site" evidence="1">
    <location>
        <begin position="11"/>
        <end position="18"/>
    </location>
    <ligand>
        <name>ATP</name>
        <dbReference type="ChEBI" id="CHEBI:30616"/>
    </ligand>
</feature>
<feature type="binding site" evidence="1">
    <location>
        <position position="96"/>
    </location>
    <ligand>
        <name>substrate</name>
    </ligand>
</feature>
<feature type="binding site" evidence="1">
    <location>
        <begin position="103"/>
        <end position="106"/>
    </location>
    <ligand>
        <name>substrate</name>
    </ligand>
</feature>
<feature type="binding site" evidence="1">
    <location>
        <position position="125"/>
    </location>
    <ligand>
        <name>K(+)</name>
        <dbReference type="ChEBI" id="CHEBI:29103"/>
    </ligand>
</feature>
<feature type="binding site" evidence="1">
    <location>
        <position position="128"/>
    </location>
    <ligand>
        <name>ATP</name>
        <dbReference type="ChEBI" id="CHEBI:30616"/>
    </ligand>
</feature>
<feature type="binding site" evidence="1">
    <location>
        <position position="179"/>
    </location>
    <ligand>
        <name>substrate</name>
    </ligand>
</feature>
<protein>
    <recommendedName>
        <fullName evidence="1">Type III pantothenate kinase</fullName>
        <ecNumber evidence="1">2.7.1.33</ecNumber>
    </recommendedName>
    <alternativeName>
        <fullName evidence="1">PanK-III</fullName>
    </alternativeName>
    <alternativeName>
        <fullName evidence="1">Pantothenic acid kinase</fullName>
    </alternativeName>
</protein>
<name>COAX_NITEC</name>
<proteinExistence type="inferred from homology"/>
<gene>
    <name evidence="1" type="primary">coaX</name>
    <name type="ordered locus">Neut_0233</name>
</gene>
<dbReference type="EC" id="2.7.1.33" evidence="1"/>
<dbReference type="EMBL" id="CP000450">
    <property type="protein sequence ID" value="ABI58517.1"/>
    <property type="molecule type" value="Genomic_DNA"/>
</dbReference>
<dbReference type="RefSeq" id="WP_011633361.1">
    <property type="nucleotide sequence ID" value="NC_008344.1"/>
</dbReference>
<dbReference type="SMR" id="Q0AJF4"/>
<dbReference type="STRING" id="335283.Neut_0233"/>
<dbReference type="KEGG" id="net:Neut_0233"/>
<dbReference type="eggNOG" id="COG1521">
    <property type="taxonomic scope" value="Bacteria"/>
</dbReference>
<dbReference type="HOGENOM" id="CLU_066627_0_0_4"/>
<dbReference type="OrthoDB" id="9781305at2"/>
<dbReference type="UniPathway" id="UPA00241">
    <property type="reaction ID" value="UER00352"/>
</dbReference>
<dbReference type="Proteomes" id="UP000001966">
    <property type="component" value="Chromosome"/>
</dbReference>
<dbReference type="GO" id="GO:0005737">
    <property type="term" value="C:cytoplasm"/>
    <property type="evidence" value="ECO:0007669"/>
    <property type="project" value="UniProtKB-SubCell"/>
</dbReference>
<dbReference type="GO" id="GO:0005524">
    <property type="term" value="F:ATP binding"/>
    <property type="evidence" value="ECO:0007669"/>
    <property type="project" value="UniProtKB-UniRule"/>
</dbReference>
<dbReference type="GO" id="GO:0046872">
    <property type="term" value="F:metal ion binding"/>
    <property type="evidence" value="ECO:0007669"/>
    <property type="project" value="UniProtKB-KW"/>
</dbReference>
<dbReference type="GO" id="GO:0004594">
    <property type="term" value="F:pantothenate kinase activity"/>
    <property type="evidence" value="ECO:0007669"/>
    <property type="project" value="UniProtKB-UniRule"/>
</dbReference>
<dbReference type="GO" id="GO:0015937">
    <property type="term" value="P:coenzyme A biosynthetic process"/>
    <property type="evidence" value="ECO:0007669"/>
    <property type="project" value="UniProtKB-UniRule"/>
</dbReference>
<dbReference type="CDD" id="cd24015">
    <property type="entry name" value="ASKHA_NBD_PanK-III"/>
    <property type="match status" value="1"/>
</dbReference>
<dbReference type="Gene3D" id="3.30.420.40">
    <property type="match status" value="2"/>
</dbReference>
<dbReference type="HAMAP" id="MF_01274">
    <property type="entry name" value="Pantothen_kinase_3"/>
    <property type="match status" value="1"/>
</dbReference>
<dbReference type="InterPro" id="IPR043129">
    <property type="entry name" value="ATPase_NBD"/>
</dbReference>
<dbReference type="InterPro" id="IPR004619">
    <property type="entry name" value="Type_III_PanK"/>
</dbReference>
<dbReference type="NCBIfam" id="TIGR00671">
    <property type="entry name" value="baf"/>
    <property type="match status" value="1"/>
</dbReference>
<dbReference type="PANTHER" id="PTHR34265">
    <property type="entry name" value="TYPE III PANTOTHENATE KINASE"/>
    <property type="match status" value="1"/>
</dbReference>
<dbReference type="PANTHER" id="PTHR34265:SF1">
    <property type="entry name" value="TYPE III PANTOTHENATE KINASE"/>
    <property type="match status" value="1"/>
</dbReference>
<dbReference type="Pfam" id="PF03309">
    <property type="entry name" value="Pan_kinase"/>
    <property type="match status" value="1"/>
</dbReference>
<dbReference type="SUPFAM" id="SSF53067">
    <property type="entry name" value="Actin-like ATPase domain"/>
    <property type="match status" value="2"/>
</dbReference>
<reference key="1">
    <citation type="journal article" date="2007" name="Environ. Microbiol.">
        <title>Whole-genome analysis of the ammonia-oxidizing bacterium, Nitrosomonas eutropha C91: implications for niche adaptation.</title>
        <authorList>
            <person name="Stein L.Y."/>
            <person name="Arp D.J."/>
            <person name="Berube P.M."/>
            <person name="Chain P.S."/>
            <person name="Hauser L."/>
            <person name="Jetten M.S."/>
            <person name="Klotz M.G."/>
            <person name="Larimer F.W."/>
            <person name="Norton J.M."/>
            <person name="Op den Camp H.J.M."/>
            <person name="Shin M."/>
            <person name="Wei X."/>
        </authorList>
    </citation>
    <scope>NUCLEOTIDE SEQUENCE [LARGE SCALE GENOMIC DNA]</scope>
    <source>
        <strain>DSM 101675 / C91 / Nm57</strain>
    </source>
</reference>
<evidence type="ECO:0000255" key="1">
    <source>
        <dbReference type="HAMAP-Rule" id="MF_01274"/>
    </source>
</evidence>
<sequence length="257" mass="27475">MNVSSFLLAIDSGNTAIKWGLHTGDQWLVRGSALQSERMVLKQAWALLPAPPASVLISNVAGLQAADDLTALLKPWYVQPHWITASASQCGVTSRYTKPEQLGCDRWAALIAAWYRVQRACLVVDVGTAMTVDTLSSTGEFLGGIIVPGPDAMKQALAGCAGTLAAPVSSCFQNFPVNTENALYSGMIQALSGALERMYRLLSSYSEKQTLTEVIMTGGGAALLAQHIHIPHRIVDSLVLEGLAIIAKSGNFDYNKK</sequence>
<comment type="function">
    <text evidence="1">Catalyzes the phosphorylation of pantothenate (Pan), the first step in CoA biosynthesis.</text>
</comment>
<comment type="catalytic activity">
    <reaction evidence="1">
        <text>(R)-pantothenate + ATP = (R)-4'-phosphopantothenate + ADP + H(+)</text>
        <dbReference type="Rhea" id="RHEA:16373"/>
        <dbReference type="ChEBI" id="CHEBI:10986"/>
        <dbReference type="ChEBI" id="CHEBI:15378"/>
        <dbReference type="ChEBI" id="CHEBI:29032"/>
        <dbReference type="ChEBI" id="CHEBI:30616"/>
        <dbReference type="ChEBI" id="CHEBI:456216"/>
        <dbReference type="EC" id="2.7.1.33"/>
    </reaction>
</comment>
<comment type="cofactor">
    <cofactor evidence="1">
        <name>NH4(+)</name>
        <dbReference type="ChEBI" id="CHEBI:28938"/>
    </cofactor>
    <cofactor evidence="1">
        <name>K(+)</name>
        <dbReference type="ChEBI" id="CHEBI:29103"/>
    </cofactor>
    <text evidence="1">A monovalent cation. Ammonium or potassium.</text>
</comment>
<comment type="pathway">
    <text evidence="1">Cofactor biosynthesis; coenzyme A biosynthesis; CoA from (R)-pantothenate: step 1/5.</text>
</comment>
<comment type="subunit">
    <text evidence="1">Homodimer.</text>
</comment>
<comment type="subcellular location">
    <subcellularLocation>
        <location evidence="1">Cytoplasm</location>
    </subcellularLocation>
</comment>
<comment type="similarity">
    <text evidence="1">Belongs to the type III pantothenate kinase family.</text>
</comment>
<accession>Q0AJF4</accession>
<organism>
    <name type="scientific">Nitrosomonas eutropha (strain DSM 101675 / C91 / Nm57)</name>
    <dbReference type="NCBI Taxonomy" id="335283"/>
    <lineage>
        <taxon>Bacteria</taxon>
        <taxon>Pseudomonadati</taxon>
        <taxon>Pseudomonadota</taxon>
        <taxon>Betaproteobacteria</taxon>
        <taxon>Nitrosomonadales</taxon>
        <taxon>Nitrosomonadaceae</taxon>
        <taxon>Nitrosomonas</taxon>
    </lineage>
</organism>
<keyword id="KW-0067">ATP-binding</keyword>
<keyword id="KW-0173">Coenzyme A biosynthesis</keyword>
<keyword id="KW-0963">Cytoplasm</keyword>
<keyword id="KW-0418">Kinase</keyword>
<keyword id="KW-0479">Metal-binding</keyword>
<keyword id="KW-0547">Nucleotide-binding</keyword>
<keyword id="KW-0630">Potassium</keyword>
<keyword id="KW-0808">Transferase</keyword>